<organism>
    <name type="scientific">Francisella tularensis subsp. tularensis (strain SCHU S4 / Schu 4)</name>
    <dbReference type="NCBI Taxonomy" id="177416"/>
    <lineage>
        <taxon>Bacteria</taxon>
        <taxon>Pseudomonadati</taxon>
        <taxon>Pseudomonadota</taxon>
        <taxon>Gammaproteobacteria</taxon>
        <taxon>Thiotrichales</taxon>
        <taxon>Francisellaceae</taxon>
        <taxon>Francisella</taxon>
    </lineage>
</organism>
<name>KTHY_FRATT</name>
<keyword id="KW-0067">ATP-binding</keyword>
<keyword id="KW-0418">Kinase</keyword>
<keyword id="KW-0545">Nucleotide biosynthesis</keyword>
<keyword id="KW-0547">Nucleotide-binding</keyword>
<keyword id="KW-1185">Reference proteome</keyword>
<keyword id="KW-0808">Transferase</keyword>
<dbReference type="EC" id="2.7.4.9" evidence="1"/>
<dbReference type="EMBL" id="AJ749949">
    <property type="protein sequence ID" value="CAG44750.1"/>
    <property type="molecule type" value="Genomic_DNA"/>
</dbReference>
<dbReference type="RefSeq" id="WP_003019864.1">
    <property type="nucleotide sequence ID" value="NZ_CP010290.1"/>
</dbReference>
<dbReference type="RefSeq" id="YP_169187.1">
    <property type="nucleotide sequence ID" value="NC_006570.2"/>
</dbReference>
<dbReference type="SMR" id="Q5NIF5"/>
<dbReference type="STRING" id="177416.FTT_0117"/>
<dbReference type="DNASU" id="3190791"/>
<dbReference type="EnsemblBacteria" id="CAG44750">
    <property type="protein sequence ID" value="CAG44750"/>
    <property type="gene ID" value="FTT_0117"/>
</dbReference>
<dbReference type="KEGG" id="ftu:FTT_0117"/>
<dbReference type="eggNOG" id="COG0125">
    <property type="taxonomic scope" value="Bacteria"/>
</dbReference>
<dbReference type="OrthoDB" id="9774907at2"/>
<dbReference type="Proteomes" id="UP000001174">
    <property type="component" value="Chromosome"/>
</dbReference>
<dbReference type="GO" id="GO:0005829">
    <property type="term" value="C:cytosol"/>
    <property type="evidence" value="ECO:0007669"/>
    <property type="project" value="TreeGrafter"/>
</dbReference>
<dbReference type="GO" id="GO:0005524">
    <property type="term" value="F:ATP binding"/>
    <property type="evidence" value="ECO:0007669"/>
    <property type="project" value="UniProtKB-UniRule"/>
</dbReference>
<dbReference type="GO" id="GO:0004798">
    <property type="term" value="F:dTMP kinase activity"/>
    <property type="evidence" value="ECO:0007669"/>
    <property type="project" value="UniProtKB-UniRule"/>
</dbReference>
<dbReference type="GO" id="GO:0006233">
    <property type="term" value="P:dTDP biosynthetic process"/>
    <property type="evidence" value="ECO:0007669"/>
    <property type="project" value="InterPro"/>
</dbReference>
<dbReference type="GO" id="GO:0006235">
    <property type="term" value="P:dTTP biosynthetic process"/>
    <property type="evidence" value="ECO:0007669"/>
    <property type="project" value="UniProtKB-UniRule"/>
</dbReference>
<dbReference type="GO" id="GO:0006227">
    <property type="term" value="P:dUDP biosynthetic process"/>
    <property type="evidence" value="ECO:0007669"/>
    <property type="project" value="TreeGrafter"/>
</dbReference>
<dbReference type="CDD" id="cd01672">
    <property type="entry name" value="TMPK"/>
    <property type="match status" value="1"/>
</dbReference>
<dbReference type="FunFam" id="3.40.50.300:FF:000225">
    <property type="entry name" value="Thymidylate kinase"/>
    <property type="match status" value="1"/>
</dbReference>
<dbReference type="Gene3D" id="3.40.50.300">
    <property type="entry name" value="P-loop containing nucleotide triphosphate hydrolases"/>
    <property type="match status" value="1"/>
</dbReference>
<dbReference type="HAMAP" id="MF_00165">
    <property type="entry name" value="Thymidylate_kinase"/>
    <property type="match status" value="1"/>
</dbReference>
<dbReference type="InterPro" id="IPR027417">
    <property type="entry name" value="P-loop_NTPase"/>
</dbReference>
<dbReference type="InterPro" id="IPR039430">
    <property type="entry name" value="Thymidylate_kin-like_dom"/>
</dbReference>
<dbReference type="InterPro" id="IPR018095">
    <property type="entry name" value="Thymidylate_kin_CS"/>
</dbReference>
<dbReference type="InterPro" id="IPR018094">
    <property type="entry name" value="Thymidylate_kinase"/>
</dbReference>
<dbReference type="NCBIfam" id="TIGR00041">
    <property type="entry name" value="DTMP_kinase"/>
    <property type="match status" value="1"/>
</dbReference>
<dbReference type="PANTHER" id="PTHR10344">
    <property type="entry name" value="THYMIDYLATE KINASE"/>
    <property type="match status" value="1"/>
</dbReference>
<dbReference type="PANTHER" id="PTHR10344:SF4">
    <property type="entry name" value="UMP-CMP KINASE 2, MITOCHONDRIAL"/>
    <property type="match status" value="1"/>
</dbReference>
<dbReference type="Pfam" id="PF02223">
    <property type="entry name" value="Thymidylate_kin"/>
    <property type="match status" value="1"/>
</dbReference>
<dbReference type="SUPFAM" id="SSF52540">
    <property type="entry name" value="P-loop containing nucleoside triphosphate hydrolases"/>
    <property type="match status" value="1"/>
</dbReference>
<dbReference type="PROSITE" id="PS01331">
    <property type="entry name" value="THYMIDYLATE_KINASE"/>
    <property type="match status" value="1"/>
</dbReference>
<reference key="1">
    <citation type="journal article" date="2005" name="Nat. Genet.">
        <title>The complete genome sequence of Francisella tularensis, the causative agent of tularemia.</title>
        <authorList>
            <person name="Larsson P."/>
            <person name="Oyston P.C.F."/>
            <person name="Chain P."/>
            <person name="Chu M.C."/>
            <person name="Duffield M."/>
            <person name="Fuxelius H.-H."/>
            <person name="Garcia E."/>
            <person name="Haelltorp G."/>
            <person name="Johansson D."/>
            <person name="Isherwood K.E."/>
            <person name="Karp P.D."/>
            <person name="Larsson E."/>
            <person name="Liu Y."/>
            <person name="Michell S."/>
            <person name="Prior J."/>
            <person name="Prior R."/>
            <person name="Malfatti S."/>
            <person name="Sjoestedt A."/>
            <person name="Svensson K."/>
            <person name="Thompson N."/>
            <person name="Vergez L."/>
            <person name="Wagg J.K."/>
            <person name="Wren B.W."/>
            <person name="Lindler L.E."/>
            <person name="Andersson S.G.E."/>
            <person name="Forsman M."/>
            <person name="Titball R.W."/>
        </authorList>
    </citation>
    <scope>NUCLEOTIDE SEQUENCE [LARGE SCALE GENOMIC DNA]</scope>
    <source>
        <strain>SCHU S4 / Schu 4</strain>
    </source>
</reference>
<gene>
    <name evidence="1" type="primary">tmk</name>
    <name type="ordered locus">FTT_0117</name>
</gene>
<comment type="function">
    <text evidence="1">Phosphorylation of dTMP to form dTDP in both de novo and salvage pathways of dTTP synthesis.</text>
</comment>
<comment type="catalytic activity">
    <reaction evidence="1">
        <text>dTMP + ATP = dTDP + ADP</text>
        <dbReference type="Rhea" id="RHEA:13517"/>
        <dbReference type="ChEBI" id="CHEBI:30616"/>
        <dbReference type="ChEBI" id="CHEBI:58369"/>
        <dbReference type="ChEBI" id="CHEBI:63528"/>
        <dbReference type="ChEBI" id="CHEBI:456216"/>
        <dbReference type="EC" id="2.7.4.9"/>
    </reaction>
</comment>
<comment type="similarity">
    <text evidence="1">Belongs to the thymidylate kinase family.</text>
</comment>
<proteinExistence type="inferred from homology"/>
<evidence type="ECO:0000255" key="1">
    <source>
        <dbReference type="HAMAP-Rule" id="MF_00165"/>
    </source>
</evidence>
<accession>Q5NIF5</accession>
<protein>
    <recommendedName>
        <fullName evidence="1">Thymidylate kinase</fullName>
        <ecNumber evidence="1">2.7.4.9</ecNumber>
    </recommendedName>
    <alternativeName>
        <fullName evidence="1">dTMP kinase</fullName>
    </alternativeName>
</protein>
<feature type="chain" id="PRO_0000155276" description="Thymidylate kinase">
    <location>
        <begin position="1"/>
        <end position="209"/>
    </location>
</feature>
<feature type="binding site" evidence="1">
    <location>
        <begin position="10"/>
        <end position="17"/>
    </location>
    <ligand>
        <name>ATP</name>
        <dbReference type="ChEBI" id="CHEBI:30616"/>
    </ligand>
</feature>
<sequence>MQSKFIVIEGLDGAGKSTAISFVRKYLEKNNLAAIYTREPGGTKIAEELRNLVLHNKYDEEIHSDSELLMIYAGRVQHYRNLIAPALEKGINVVSDRFYWSSMAYQGGGRGVELSKIRALNDNFLNGCEPDLVIYLDIDPILGLQRAQKVGSPDRIEKAGLEFFNRTRKVFKDLVKDSDNAIEIDAAKSIQEVEKQIYLILDKHFNFQN</sequence>